<gene>
    <name evidence="1" type="primary">kefF</name>
    <name type="ordered locus">EFER_0054</name>
</gene>
<name>KEFF_ESCF3</name>
<organism>
    <name type="scientific">Escherichia fergusonii (strain ATCC 35469 / DSM 13698 / CCUG 18766 / IAM 14443 / JCM 21226 / LMG 7866 / NBRC 102419 / NCTC 12128 / CDC 0568-73)</name>
    <dbReference type="NCBI Taxonomy" id="585054"/>
    <lineage>
        <taxon>Bacteria</taxon>
        <taxon>Pseudomonadati</taxon>
        <taxon>Pseudomonadota</taxon>
        <taxon>Gammaproteobacteria</taxon>
        <taxon>Enterobacterales</taxon>
        <taxon>Enterobacteriaceae</taxon>
        <taxon>Escherichia</taxon>
    </lineage>
</organism>
<comment type="function">
    <text evidence="1">Regulatory subunit of a potassium efflux system that confers protection against electrophiles. Required for full activity of KefC. Shows redox enzymatic activity, but this enzymatic activity is not required for activation of KefC.</text>
</comment>
<comment type="catalytic activity">
    <reaction evidence="1">
        <text>a quinone + NADH + H(+) = a quinol + NAD(+)</text>
        <dbReference type="Rhea" id="RHEA:46160"/>
        <dbReference type="ChEBI" id="CHEBI:15378"/>
        <dbReference type="ChEBI" id="CHEBI:24646"/>
        <dbReference type="ChEBI" id="CHEBI:57540"/>
        <dbReference type="ChEBI" id="CHEBI:57945"/>
        <dbReference type="ChEBI" id="CHEBI:132124"/>
        <dbReference type="EC" id="1.6.5.2"/>
    </reaction>
</comment>
<comment type="catalytic activity">
    <reaction evidence="1">
        <text>a quinone + NADPH + H(+) = a quinol + NADP(+)</text>
        <dbReference type="Rhea" id="RHEA:46164"/>
        <dbReference type="ChEBI" id="CHEBI:15378"/>
        <dbReference type="ChEBI" id="CHEBI:24646"/>
        <dbReference type="ChEBI" id="CHEBI:57783"/>
        <dbReference type="ChEBI" id="CHEBI:58349"/>
        <dbReference type="ChEBI" id="CHEBI:132124"/>
        <dbReference type="EC" id="1.6.5.2"/>
    </reaction>
</comment>
<comment type="cofactor">
    <cofactor evidence="1">
        <name>FMN</name>
        <dbReference type="ChEBI" id="CHEBI:58210"/>
    </cofactor>
</comment>
<comment type="subunit">
    <text evidence="1">Homodimer. Interacts with KefC.</text>
</comment>
<comment type="subcellular location">
    <subcellularLocation>
        <location evidence="1">Cell inner membrane</location>
        <topology evidence="1">Peripheral membrane protein</topology>
        <orientation evidence="1">Cytoplasmic side</orientation>
    </subcellularLocation>
</comment>
<comment type="similarity">
    <text evidence="1">Belongs to the NAD(P)H dehydrogenase (quinone) family. KefF subfamily.</text>
</comment>
<keyword id="KW-0997">Cell inner membrane</keyword>
<keyword id="KW-1003">Cell membrane</keyword>
<keyword id="KW-0285">Flavoprotein</keyword>
<keyword id="KW-0288">FMN</keyword>
<keyword id="KW-0472">Membrane</keyword>
<keyword id="KW-0520">NAD</keyword>
<keyword id="KW-0560">Oxidoreductase</keyword>
<sequence>MILIIYAHPYPHHSHANKRMLEHARTLEGVEVRSLYQLYPDFNIDIAAEQEALSRADLIVWQHPMQWYSIPPLLKLWIDKVFSHGWAYGHGGTALHGKHLLWAVTTGGGESHFEIGAHPGFDVLSQPLQATAIYCGLNWLPPFAMHCTFICDDETLEGQARHYKQRLLEWQEAYHG</sequence>
<accession>B7LVT7</accession>
<evidence type="ECO:0000255" key="1">
    <source>
        <dbReference type="HAMAP-Rule" id="MF_01414"/>
    </source>
</evidence>
<feature type="chain" id="PRO_1000145561" description="Glutathione-regulated potassium-efflux system ancillary protein KefF">
    <location>
        <begin position="1"/>
        <end position="176"/>
    </location>
</feature>
<feature type="binding site" evidence="1">
    <location>
        <position position="8"/>
    </location>
    <ligand>
        <name>FMN</name>
        <dbReference type="ChEBI" id="CHEBI:58210"/>
    </ligand>
</feature>
<feature type="binding site" evidence="1">
    <location>
        <begin position="14"/>
        <end position="17"/>
    </location>
    <ligand>
        <name>FMN</name>
        <dbReference type="ChEBI" id="CHEBI:58210"/>
    </ligand>
</feature>
<feature type="binding site" evidence="1">
    <location>
        <begin position="65"/>
        <end position="68"/>
    </location>
    <ligand>
        <name>FMN</name>
        <dbReference type="ChEBI" id="CHEBI:58210"/>
    </ligand>
</feature>
<feature type="binding site" evidence="1">
    <location>
        <begin position="105"/>
        <end position="108"/>
    </location>
    <ligand>
        <name>FMN</name>
        <dbReference type="ChEBI" id="CHEBI:58210"/>
    </ligand>
</feature>
<dbReference type="EC" id="1.6.5.2" evidence="1"/>
<dbReference type="EMBL" id="CU928158">
    <property type="protein sequence ID" value="CAQ87640.1"/>
    <property type="molecule type" value="Genomic_DNA"/>
</dbReference>
<dbReference type="RefSeq" id="WP_000600701.1">
    <property type="nucleotide sequence ID" value="NC_011740.1"/>
</dbReference>
<dbReference type="SMR" id="B7LVT7"/>
<dbReference type="GeneID" id="75058858"/>
<dbReference type="KEGG" id="efe:EFER_0054"/>
<dbReference type="HOGENOM" id="CLU_058643_0_1_6"/>
<dbReference type="OrthoDB" id="9798454at2"/>
<dbReference type="Proteomes" id="UP000000745">
    <property type="component" value="Chromosome"/>
</dbReference>
<dbReference type="GO" id="GO:0005886">
    <property type="term" value="C:plasma membrane"/>
    <property type="evidence" value="ECO:0007669"/>
    <property type="project" value="UniProtKB-SubCell"/>
</dbReference>
<dbReference type="GO" id="GO:0009055">
    <property type="term" value="F:electron transfer activity"/>
    <property type="evidence" value="ECO:0007669"/>
    <property type="project" value="TreeGrafter"/>
</dbReference>
<dbReference type="GO" id="GO:0010181">
    <property type="term" value="F:FMN binding"/>
    <property type="evidence" value="ECO:0007669"/>
    <property type="project" value="UniProtKB-UniRule"/>
</dbReference>
<dbReference type="GO" id="GO:0050136">
    <property type="term" value="F:NADH:ubiquinone reductase (non-electrogenic) activity"/>
    <property type="evidence" value="ECO:0007669"/>
    <property type="project" value="RHEA"/>
</dbReference>
<dbReference type="GO" id="GO:0008753">
    <property type="term" value="F:NADPH dehydrogenase (quinone) activity"/>
    <property type="evidence" value="ECO:0007669"/>
    <property type="project" value="RHEA"/>
</dbReference>
<dbReference type="GO" id="GO:1901381">
    <property type="term" value="P:positive regulation of potassium ion transmembrane transport"/>
    <property type="evidence" value="ECO:0007669"/>
    <property type="project" value="UniProtKB-UniRule"/>
</dbReference>
<dbReference type="GO" id="GO:0006813">
    <property type="term" value="P:potassium ion transport"/>
    <property type="evidence" value="ECO:0007669"/>
    <property type="project" value="InterPro"/>
</dbReference>
<dbReference type="FunFam" id="3.40.50.360:FF:000008">
    <property type="entry name" value="Glutathione-regulated potassium-efflux system ancillary protein KefF"/>
    <property type="match status" value="1"/>
</dbReference>
<dbReference type="Gene3D" id="3.40.50.360">
    <property type="match status" value="1"/>
</dbReference>
<dbReference type="HAMAP" id="MF_01414">
    <property type="entry name" value="K_H_efflux_KefF"/>
    <property type="match status" value="1"/>
</dbReference>
<dbReference type="InterPro" id="IPR003680">
    <property type="entry name" value="Flavodoxin_fold"/>
</dbReference>
<dbReference type="InterPro" id="IPR029039">
    <property type="entry name" value="Flavoprotein-like_sf"/>
</dbReference>
<dbReference type="InterPro" id="IPR023948">
    <property type="entry name" value="K_H_efflux_KefF"/>
</dbReference>
<dbReference type="InterPro" id="IPR046980">
    <property type="entry name" value="KefG/KefF"/>
</dbReference>
<dbReference type="NCBIfam" id="NF002044">
    <property type="entry name" value="PRK00871.1"/>
    <property type="match status" value="1"/>
</dbReference>
<dbReference type="PANTHER" id="PTHR47307:SF2">
    <property type="entry name" value="GLUTATHIONE-REGULATED POTASSIUM-EFFLUX SYSTEM ANCILLARY PROTEIN KEFF"/>
    <property type="match status" value="1"/>
</dbReference>
<dbReference type="PANTHER" id="PTHR47307">
    <property type="entry name" value="GLUTATHIONE-REGULATED POTASSIUM-EFFLUX SYSTEM ANCILLARY PROTEIN KEFG"/>
    <property type="match status" value="1"/>
</dbReference>
<dbReference type="Pfam" id="PF02525">
    <property type="entry name" value="Flavodoxin_2"/>
    <property type="match status" value="1"/>
</dbReference>
<dbReference type="SUPFAM" id="SSF52218">
    <property type="entry name" value="Flavoproteins"/>
    <property type="match status" value="1"/>
</dbReference>
<reference key="1">
    <citation type="journal article" date="2009" name="PLoS Genet.">
        <title>Organised genome dynamics in the Escherichia coli species results in highly diverse adaptive paths.</title>
        <authorList>
            <person name="Touchon M."/>
            <person name="Hoede C."/>
            <person name="Tenaillon O."/>
            <person name="Barbe V."/>
            <person name="Baeriswyl S."/>
            <person name="Bidet P."/>
            <person name="Bingen E."/>
            <person name="Bonacorsi S."/>
            <person name="Bouchier C."/>
            <person name="Bouvet O."/>
            <person name="Calteau A."/>
            <person name="Chiapello H."/>
            <person name="Clermont O."/>
            <person name="Cruveiller S."/>
            <person name="Danchin A."/>
            <person name="Diard M."/>
            <person name="Dossat C."/>
            <person name="Karoui M.E."/>
            <person name="Frapy E."/>
            <person name="Garry L."/>
            <person name="Ghigo J.M."/>
            <person name="Gilles A.M."/>
            <person name="Johnson J."/>
            <person name="Le Bouguenec C."/>
            <person name="Lescat M."/>
            <person name="Mangenot S."/>
            <person name="Martinez-Jehanne V."/>
            <person name="Matic I."/>
            <person name="Nassif X."/>
            <person name="Oztas S."/>
            <person name="Petit M.A."/>
            <person name="Pichon C."/>
            <person name="Rouy Z."/>
            <person name="Ruf C.S."/>
            <person name="Schneider D."/>
            <person name="Tourret J."/>
            <person name="Vacherie B."/>
            <person name="Vallenet D."/>
            <person name="Medigue C."/>
            <person name="Rocha E.P.C."/>
            <person name="Denamur E."/>
        </authorList>
    </citation>
    <scope>NUCLEOTIDE SEQUENCE [LARGE SCALE GENOMIC DNA]</scope>
    <source>
        <strain>ATCC 35469 / DSM 13698 / BCRC 15582 / CCUG 18766 / IAM 14443 / JCM 21226 / LMG 7866 / NBRC 102419 / NCTC 12128 / CDC 0568-73</strain>
    </source>
</reference>
<proteinExistence type="inferred from homology"/>
<protein>
    <recommendedName>
        <fullName evidence="1">Glutathione-regulated potassium-efflux system ancillary protein KefF</fullName>
    </recommendedName>
    <alternativeName>
        <fullName evidence="1">Quinone oxidoreductase KefF</fullName>
        <ecNumber evidence="1">1.6.5.2</ecNumber>
    </alternativeName>
</protein>